<accession>Q5NL80</accession>
<keyword id="KW-0963">Cytoplasm</keyword>
<keyword id="KW-0396">Initiation factor</keyword>
<keyword id="KW-0648">Protein biosynthesis</keyword>
<keyword id="KW-1185">Reference proteome</keyword>
<organism>
    <name type="scientific">Zymomonas mobilis subsp. mobilis (strain ATCC 31821 / ZM4 / CP4)</name>
    <dbReference type="NCBI Taxonomy" id="264203"/>
    <lineage>
        <taxon>Bacteria</taxon>
        <taxon>Pseudomonadati</taxon>
        <taxon>Pseudomonadota</taxon>
        <taxon>Alphaproteobacteria</taxon>
        <taxon>Sphingomonadales</taxon>
        <taxon>Zymomonadaceae</taxon>
        <taxon>Zymomonas</taxon>
    </lineage>
</organism>
<gene>
    <name evidence="1" type="primary">infC</name>
    <name type="ordered locus">ZMO1906</name>
</gene>
<sequence length="179" mass="20636">MMRRPHGQAAMPMSGPRYNEFIQSPRVRVIDENGENLGVMYTRQAMEQAQEVGLDLVEVSPNADPPVAKFLDVGKYKYEAQKKANLARKTQKTQEIKEIKLRPNIDQHDYDTKMKKIVQFLEDGDKVKVTLRFRGREMAHGQLGMQVMQRVQADTQEIAKVEQHPRMEGRQMLMVVAPK</sequence>
<proteinExistence type="inferred from homology"/>
<comment type="function">
    <text evidence="1">IF-3 binds to the 30S ribosomal subunit and shifts the equilibrium between 70S ribosomes and their 50S and 30S subunits in favor of the free subunits, thus enhancing the availability of 30S subunits on which protein synthesis initiation begins.</text>
</comment>
<comment type="subunit">
    <text evidence="1">Monomer.</text>
</comment>
<comment type="subcellular location">
    <subcellularLocation>
        <location evidence="1">Cytoplasm</location>
    </subcellularLocation>
</comment>
<comment type="similarity">
    <text evidence="1">Belongs to the IF-3 family.</text>
</comment>
<evidence type="ECO:0000255" key="1">
    <source>
        <dbReference type="HAMAP-Rule" id="MF_00080"/>
    </source>
</evidence>
<dbReference type="EMBL" id="AE008692">
    <property type="protein sequence ID" value="AAV90530.1"/>
    <property type="molecule type" value="Genomic_DNA"/>
</dbReference>
<dbReference type="SMR" id="Q5NL80"/>
<dbReference type="STRING" id="264203.ZMO1906"/>
<dbReference type="KEGG" id="zmo:ZMO1906"/>
<dbReference type="eggNOG" id="COG0290">
    <property type="taxonomic scope" value="Bacteria"/>
</dbReference>
<dbReference type="HOGENOM" id="CLU_054919_3_2_5"/>
<dbReference type="Proteomes" id="UP000001173">
    <property type="component" value="Chromosome"/>
</dbReference>
<dbReference type="GO" id="GO:0005829">
    <property type="term" value="C:cytosol"/>
    <property type="evidence" value="ECO:0007669"/>
    <property type="project" value="TreeGrafter"/>
</dbReference>
<dbReference type="GO" id="GO:0016020">
    <property type="term" value="C:membrane"/>
    <property type="evidence" value="ECO:0007669"/>
    <property type="project" value="TreeGrafter"/>
</dbReference>
<dbReference type="GO" id="GO:0043022">
    <property type="term" value="F:ribosome binding"/>
    <property type="evidence" value="ECO:0007669"/>
    <property type="project" value="TreeGrafter"/>
</dbReference>
<dbReference type="GO" id="GO:0003743">
    <property type="term" value="F:translation initiation factor activity"/>
    <property type="evidence" value="ECO:0007669"/>
    <property type="project" value="UniProtKB-UniRule"/>
</dbReference>
<dbReference type="GO" id="GO:0032790">
    <property type="term" value="P:ribosome disassembly"/>
    <property type="evidence" value="ECO:0007669"/>
    <property type="project" value="TreeGrafter"/>
</dbReference>
<dbReference type="FunFam" id="3.30.110.10:FF:000001">
    <property type="entry name" value="Translation initiation factor IF-3"/>
    <property type="match status" value="1"/>
</dbReference>
<dbReference type="Gene3D" id="3.30.110.10">
    <property type="entry name" value="Translation initiation factor 3 (IF-3), C-terminal domain"/>
    <property type="match status" value="1"/>
</dbReference>
<dbReference type="Gene3D" id="3.10.20.80">
    <property type="entry name" value="Translation initiation factor 3 (IF-3), N-terminal domain"/>
    <property type="match status" value="1"/>
</dbReference>
<dbReference type="HAMAP" id="MF_00080">
    <property type="entry name" value="IF_3"/>
    <property type="match status" value="1"/>
</dbReference>
<dbReference type="InterPro" id="IPR036788">
    <property type="entry name" value="T_IF-3_C_sf"/>
</dbReference>
<dbReference type="InterPro" id="IPR036787">
    <property type="entry name" value="T_IF-3_N_sf"/>
</dbReference>
<dbReference type="InterPro" id="IPR001288">
    <property type="entry name" value="Translation_initiation_fac_3"/>
</dbReference>
<dbReference type="InterPro" id="IPR019815">
    <property type="entry name" value="Translation_initiation_fac_3_C"/>
</dbReference>
<dbReference type="InterPro" id="IPR019814">
    <property type="entry name" value="Translation_initiation_fac_3_N"/>
</dbReference>
<dbReference type="NCBIfam" id="TIGR00168">
    <property type="entry name" value="infC"/>
    <property type="match status" value="1"/>
</dbReference>
<dbReference type="PANTHER" id="PTHR10938">
    <property type="entry name" value="TRANSLATION INITIATION FACTOR IF-3"/>
    <property type="match status" value="1"/>
</dbReference>
<dbReference type="PANTHER" id="PTHR10938:SF0">
    <property type="entry name" value="TRANSLATION INITIATION FACTOR IF-3, MITOCHONDRIAL"/>
    <property type="match status" value="1"/>
</dbReference>
<dbReference type="Pfam" id="PF00707">
    <property type="entry name" value="IF3_C"/>
    <property type="match status" value="1"/>
</dbReference>
<dbReference type="Pfam" id="PF05198">
    <property type="entry name" value="IF3_N"/>
    <property type="match status" value="1"/>
</dbReference>
<dbReference type="SUPFAM" id="SSF55200">
    <property type="entry name" value="Translation initiation factor IF3, C-terminal domain"/>
    <property type="match status" value="1"/>
</dbReference>
<dbReference type="SUPFAM" id="SSF54364">
    <property type="entry name" value="Translation initiation factor IF3, N-terminal domain"/>
    <property type="match status" value="1"/>
</dbReference>
<name>IF3_ZYMMO</name>
<protein>
    <recommendedName>
        <fullName evidence="1">Translation initiation factor IF-3</fullName>
    </recommendedName>
</protein>
<feature type="chain" id="PRO_0000177613" description="Translation initiation factor IF-3">
    <location>
        <begin position="1"/>
        <end position="179"/>
    </location>
</feature>
<reference key="1">
    <citation type="journal article" date="2005" name="Nat. Biotechnol.">
        <title>The genome sequence of the ethanologenic bacterium Zymomonas mobilis ZM4.</title>
        <authorList>
            <person name="Seo J.-S."/>
            <person name="Chong H."/>
            <person name="Park H.S."/>
            <person name="Yoon K.-O."/>
            <person name="Jung C."/>
            <person name="Kim J.J."/>
            <person name="Hong J.H."/>
            <person name="Kim H."/>
            <person name="Kim J.-H."/>
            <person name="Kil J.-I."/>
            <person name="Park C.J."/>
            <person name="Oh H.-M."/>
            <person name="Lee J.-S."/>
            <person name="Jin S.-J."/>
            <person name="Um H.-W."/>
            <person name="Lee H.-J."/>
            <person name="Oh S.-J."/>
            <person name="Kim J.Y."/>
            <person name="Kang H.L."/>
            <person name="Lee S.Y."/>
            <person name="Lee K.J."/>
            <person name="Kang H.S."/>
        </authorList>
    </citation>
    <scope>NUCLEOTIDE SEQUENCE [LARGE SCALE GENOMIC DNA]</scope>
    <source>
        <strain>ATCC 31821 / ZM4 / CP4</strain>
    </source>
</reference>